<proteinExistence type="evidence at transcript level"/>
<dbReference type="EC" id="3.4.24.-"/>
<dbReference type="EMBL" id="EF080840">
    <property type="protein sequence ID" value="ABN72547.1"/>
    <property type="molecule type" value="mRNA"/>
</dbReference>
<dbReference type="SMR" id="A8QL59"/>
<dbReference type="MEROPS" id="M12.331"/>
<dbReference type="GO" id="GO:0005576">
    <property type="term" value="C:extracellular region"/>
    <property type="evidence" value="ECO:0007669"/>
    <property type="project" value="UniProtKB-SubCell"/>
</dbReference>
<dbReference type="GO" id="GO:0043655">
    <property type="term" value="C:host extracellular space"/>
    <property type="evidence" value="ECO:0000250"/>
    <property type="project" value="UniProtKB"/>
</dbReference>
<dbReference type="GO" id="GO:0005886">
    <property type="term" value="C:plasma membrane"/>
    <property type="evidence" value="ECO:0007669"/>
    <property type="project" value="TreeGrafter"/>
</dbReference>
<dbReference type="GO" id="GO:0046872">
    <property type="term" value="F:metal ion binding"/>
    <property type="evidence" value="ECO:0007669"/>
    <property type="project" value="UniProtKB-KW"/>
</dbReference>
<dbReference type="GO" id="GO:0004222">
    <property type="term" value="F:metalloendopeptidase activity"/>
    <property type="evidence" value="ECO:0000250"/>
    <property type="project" value="UniProtKB"/>
</dbReference>
<dbReference type="GO" id="GO:0090729">
    <property type="term" value="F:toxin activity"/>
    <property type="evidence" value="ECO:0007669"/>
    <property type="project" value="UniProtKB-KW"/>
</dbReference>
<dbReference type="GO" id="GO:0006508">
    <property type="term" value="P:proteolysis"/>
    <property type="evidence" value="ECO:0007669"/>
    <property type="project" value="UniProtKB-KW"/>
</dbReference>
<dbReference type="GO" id="GO:0044485">
    <property type="term" value="P:venom-mediated fibrinogenolysis in another organism"/>
    <property type="evidence" value="ECO:0000250"/>
    <property type="project" value="UniProtKB"/>
</dbReference>
<dbReference type="GO" id="GO:0044358">
    <property type="term" value="P:venom-mediated hemorrhage in another organism"/>
    <property type="evidence" value="ECO:0000250"/>
    <property type="project" value="UniProtKB"/>
</dbReference>
<dbReference type="GO" id="GO:0044477">
    <property type="term" value="P:venom-mediated suppression of platelet aggregation"/>
    <property type="evidence" value="ECO:0000250"/>
    <property type="project" value="UniProtKB"/>
</dbReference>
<dbReference type="CDD" id="cd04269">
    <property type="entry name" value="ZnMc_adamalysin_II_like"/>
    <property type="match status" value="1"/>
</dbReference>
<dbReference type="FunFam" id="3.40.390.10:FF:000002">
    <property type="entry name" value="Disintegrin and metalloproteinase domain-containing protein 22"/>
    <property type="match status" value="1"/>
</dbReference>
<dbReference type="FunFam" id="4.10.70.10:FF:000001">
    <property type="entry name" value="Disintegrin and metalloproteinase domain-containing protein 22"/>
    <property type="match status" value="1"/>
</dbReference>
<dbReference type="Gene3D" id="3.40.390.10">
    <property type="entry name" value="Collagenase (Catalytic Domain)"/>
    <property type="match status" value="1"/>
</dbReference>
<dbReference type="Gene3D" id="4.10.70.10">
    <property type="entry name" value="Disintegrin domain"/>
    <property type="match status" value="1"/>
</dbReference>
<dbReference type="InterPro" id="IPR006586">
    <property type="entry name" value="ADAM_Cys-rich"/>
</dbReference>
<dbReference type="InterPro" id="IPR018358">
    <property type="entry name" value="Disintegrin_CS"/>
</dbReference>
<dbReference type="InterPro" id="IPR001762">
    <property type="entry name" value="Disintegrin_dom"/>
</dbReference>
<dbReference type="InterPro" id="IPR036436">
    <property type="entry name" value="Disintegrin_dom_sf"/>
</dbReference>
<dbReference type="InterPro" id="IPR024079">
    <property type="entry name" value="MetalloPept_cat_dom_sf"/>
</dbReference>
<dbReference type="InterPro" id="IPR001590">
    <property type="entry name" value="Peptidase_M12B"/>
</dbReference>
<dbReference type="InterPro" id="IPR002870">
    <property type="entry name" value="Peptidase_M12B_N"/>
</dbReference>
<dbReference type="InterPro" id="IPR034027">
    <property type="entry name" value="Reprolysin_adamalysin"/>
</dbReference>
<dbReference type="PANTHER" id="PTHR11905">
    <property type="entry name" value="ADAM A DISINTEGRIN AND METALLOPROTEASE DOMAIN"/>
    <property type="match status" value="1"/>
</dbReference>
<dbReference type="PANTHER" id="PTHR11905:SF32">
    <property type="entry name" value="DISINTEGRIN AND METALLOPROTEINASE DOMAIN-CONTAINING PROTEIN 28"/>
    <property type="match status" value="1"/>
</dbReference>
<dbReference type="Pfam" id="PF08516">
    <property type="entry name" value="ADAM_CR"/>
    <property type="match status" value="1"/>
</dbReference>
<dbReference type="Pfam" id="PF00200">
    <property type="entry name" value="Disintegrin"/>
    <property type="match status" value="1"/>
</dbReference>
<dbReference type="Pfam" id="PF01562">
    <property type="entry name" value="Pep_M12B_propep"/>
    <property type="match status" value="1"/>
</dbReference>
<dbReference type="Pfam" id="PF01421">
    <property type="entry name" value="Reprolysin"/>
    <property type="match status" value="1"/>
</dbReference>
<dbReference type="PRINTS" id="PR00289">
    <property type="entry name" value="DISINTEGRIN"/>
</dbReference>
<dbReference type="SMART" id="SM00608">
    <property type="entry name" value="ACR"/>
    <property type="match status" value="1"/>
</dbReference>
<dbReference type="SMART" id="SM00050">
    <property type="entry name" value="DISIN"/>
    <property type="match status" value="1"/>
</dbReference>
<dbReference type="SUPFAM" id="SSF57552">
    <property type="entry name" value="Blood coagulation inhibitor (disintegrin)"/>
    <property type="match status" value="1"/>
</dbReference>
<dbReference type="SUPFAM" id="SSF55486">
    <property type="entry name" value="Metalloproteases ('zincins'), catalytic domain"/>
    <property type="match status" value="1"/>
</dbReference>
<dbReference type="PROSITE" id="PS50215">
    <property type="entry name" value="ADAM_MEPRO"/>
    <property type="match status" value="1"/>
</dbReference>
<dbReference type="PROSITE" id="PS00427">
    <property type="entry name" value="DISINTEGRIN_1"/>
    <property type="match status" value="1"/>
</dbReference>
<dbReference type="PROSITE" id="PS50214">
    <property type="entry name" value="DISINTEGRIN_2"/>
    <property type="match status" value="1"/>
</dbReference>
<dbReference type="PROSITE" id="PS00142">
    <property type="entry name" value="ZINC_PROTEASE"/>
    <property type="match status" value="1"/>
</dbReference>
<feature type="signal peptide" evidence="2">
    <location>
        <begin position="1"/>
        <end position="20"/>
    </location>
</feature>
<feature type="propeptide" id="PRO_0000417641" evidence="1">
    <location>
        <begin position="21"/>
        <end position="188"/>
    </location>
</feature>
<feature type="chain" id="PRO_0000417642" description="Zinc metalloproteinase-disintegrin-like NaMP">
    <location>
        <begin position="189"/>
        <end position="621"/>
    </location>
</feature>
<feature type="domain" description="Peptidase M12B" evidence="4">
    <location>
        <begin position="206"/>
        <end position="402"/>
    </location>
</feature>
<feature type="domain" description="Disintegrin" evidence="3">
    <location>
        <begin position="410"/>
        <end position="496"/>
    </location>
</feature>
<feature type="short sequence motif" description="D/ECD-tripeptide">
    <location>
        <begin position="474"/>
        <end position="476"/>
    </location>
</feature>
<feature type="active site" evidence="4 5">
    <location>
        <position position="343"/>
    </location>
</feature>
<feature type="binding site" evidence="1">
    <location>
        <position position="342"/>
    </location>
    <ligand>
        <name>Zn(2+)</name>
        <dbReference type="ChEBI" id="CHEBI:29105"/>
        <note>catalytic</note>
    </ligand>
</feature>
<feature type="binding site" evidence="1">
    <location>
        <position position="346"/>
    </location>
    <ligand>
        <name>Zn(2+)</name>
        <dbReference type="ChEBI" id="CHEBI:29105"/>
        <note>catalytic</note>
    </ligand>
</feature>
<feature type="binding site" evidence="1">
    <location>
        <position position="352"/>
    </location>
    <ligand>
        <name>Zn(2+)</name>
        <dbReference type="ChEBI" id="CHEBI:29105"/>
        <note>catalytic</note>
    </ligand>
</feature>
<feature type="glycosylation site" description="N-linked (GlcNAc...) asparagine" evidence="2">
    <location>
        <position position="225"/>
    </location>
</feature>
<feature type="glycosylation site" description="N-linked (GlcNAc...) asparagine" evidence="2">
    <location>
        <position position="268"/>
    </location>
</feature>
<feature type="glycosylation site" description="N-linked (GlcNAc...) asparagine" evidence="2">
    <location>
        <position position="319"/>
    </location>
</feature>
<feature type="glycosylation site" description="N-linked (GlcNAc...) asparagine" evidence="2">
    <location>
        <position position="551"/>
    </location>
</feature>
<feature type="disulfide bond" evidence="1">
    <location>
        <begin position="317"/>
        <end position="397"/>
    </location>
</feature>
<feature type="disulfide bond" evidence="1">
    <location>
        <begin position="357"/>
        <end position="381"/>
    </location>
</feature>
<feature type="disulfide bond" evidence="1">
    <location>
        <begin position="359"/>
        <end position="364"/>
    </location>
</feature>
<feature type="disulfide bond" evidence="1">
    <location>
        <begin position="413"/>
        <end position="442"/>
    </location>
</feature>
<feature type="disulfide bond" evidence="1">
    <location>
        <begin position="424"/>
        <end position="437"/>
    </location>
</feature>
<feature type="disulfide bond" evidence="1">
    <location>
        <begin position="426"/>
        <end position="432"/>
    </location>
</feature>
<feature type="disulfide bond" evidence="1">
    <location>
        <begin position="436"/>
        <end position="459"/>
    </location>
</feature>
<feature type="disulfide bond" evidence="1">
    <location>
        <begin position="450"/>
        <end position="456"/>
    </location>
</feature>
<feature type="disulfide bond" evidence="1">
    <location>
        <begin position="455"/>
        <end position="481"/>
    </location>
</feature>
<feature type="disulfide bond" evidence="1">
    <location>
        <begin position="468"/>
        <end position="488"/>
    </location>
</feature>
<feature type="disulfide bond" evidence="1">
    <location>
        <begin position="475"/>
        <end position="507"/>
    </location>
</feature>
<feature type="disulfide bond" evidence="1">
    <location>
        <begin position="500"/>
        <end position="512"/>
    </location>
</feature>
<feature type="disulfide bond" evidence="1">
    <location>
        <begin position="519"/>
        <end position="569"/>
    </location>
</feature>
<feature type="disulfide bond" evidence="1">
    <location>
        <begin position="534"/>
        <end position="579"/>
    </location>
</feature>
<feature type="disulfide bond" evidence="1">
    <location>
        <begin position="547"/>
        <end position="557"/>
    </location>
</feature>
<feature type="disulfide bond" evidence="1">
    <location>
        <begin position="564"/>
        <end position="605"/>
    </location>
</feature>
<feature type="disulfide bond" evidence="1">
    <location>
        <begin position="599"/>
        <end position="610"/>
    </location>
</feature>
<keyword id="KW-1217">Cell adhesion impairing toxin</keyword>
<keyword id="KW-1015">Disulfide bond</keyword>
<keyword id="KW-1206">Fibrinogenolytic toxin</keyword>
<keyword id="KW-0325">Glycoprotein</keyword>
<keyword id="KW-1199">Hemostasis impairing toxin</keyword>
<keyword id="KW-0378">Hydrolase</keyword>
<keyword id="KW-0479">Metal-binding</keyword>
<keyword id="KW-0482">Metalloprotease</keyword>
<keyword id="KW-1201">Platelet aggregation inhibiting toxin</keyword>
<keyword id="KW-0645">Protease</keyword>
<keyword id="KW-0964">Secreted</keyword>
<keyword id="KW-0732">Signal</keyword>
<keyword id="KW-0800">Toxin</keyword>
<keyword id="KW-0862">Zinc</keyword>
<keyword id="KW-0865">Zymogen</keyword>
<organism>
    <name type="scientific">Naja atra</name>
    <name type="common">Chinese cobra</name>
    <dbReference type="NCBI Taxonomy" id="8656"/>
    <lineage>
        <taxon>Eukaryota</taxon>
        <taxon>Metazoa</taxon>
        <taxon>Chordata</taxon>
        <taxon>Craniata</taxon>
        <taxon>Vertebrata</taxon>
        <taxon>Euteleostomi</taxon>
        <taxon>Lepidosauria</taxon>
        <taxon>Squamata</taxon>
        <taxon>Bifurcata</taxon>
        <taxon>Unidentata</taxon>
        <taxon>Episquamata</taxon>
        <taxon>Toxicofera</taxon>
        <taxon>Serpentes</taxon>
        <taxon>Colubroidea</taxon>
        <taxon>Elapidae</taxon>
        <taxon>Elapinae</taxon>
        <taxon>Naja</taxon>
    </lineage>
</organism>
<name>VM3_NAJAT</name>
<reference key="1">
    <citation type="journal article" date="2007" name="Toxicon">
        <title>Isolation and cloning of a metalloproteinase from king cobra snake venom.</title>
        <authorList>
            <person name="Guo X.-X."/>
            <person name="Zeng L."/>
            <person name="Lee W.-H."/>
            <person name="Zhang Y."/>
            <person name="Jin Y."/>
        </authorList>
    </citation>
    <scope>NUCLEOTIDE SEQUENCE [MRNA]</scope>
    <source>
        <tissue>Venom gland</tissue>
    </source>
</reference>
<sequence>MIQPLLVAICLVVFPYQGSSTILESGKVRDYEVVYPQKIPSLPKGRLQRREEKTKYENTMKYEFKVNGEPVVLNLEKNKRLFSKDYTETHYSPDGREITTSPPVQDHCYYHGHIQNDADSTAVIRACDGLNGYFKSNGEMYIIEPLKLSDSEAHAVFKYESLEKEDETPKTCGAIHNSGESDETIKKISNTFVTPEKGEEYLEAEKHIELYMVADNLVYRKYSSNITVVRMRIFEILNYVNLYYKILNIHVVLIGLEVWSDEDKILINGSSELTVRSFAAWRHSDLLKHKRNDNAQLLTGIHFDKRVLGIAFIGGMCNNFTSVGAIQDNSIHAVLIAATMTHELGHNLGMNHDTDSCTCNTGPCIMKAALNFKPPYEFSSCSYWDFQNYIMTKSAQCILNDPLTTDIVPTAICGNGFVEEGEECDCGPPEICKNECCEAATCKLKPEAQCASGACCEECQFRRAGELCRAAKDDCDLDELCTGQSAECPMNHFHMNGHPCQNNQGYCFRGTCPTLTKQCIALWGPDAEVAPDGCFMNNQKGNYYGYCKKKNGTNIPCEPENVKCGRLYCIDDSTEENSCKFHFSNENANSGMVQPGTKCGEGMVCGFGECIGLETALGINQ</sequence>
<comment type="function">
    <text evidence="1">Snake venom zinc metalloproteinase that inhibits platelet aggregation and degrades fibrinogen.</text>
</comment>
<comment type="cofactor">
    <cofactor evidence="1">
        <name>Zn(2+)</name>
        <dbReference type="ChEBI" id="CHEBI:29105"/>
    </cofactor>
    <text evidence="1">Binds 1 zinc ion per subunit.</text>
</comment>
<comment type="subunit">
    <text evidence="1">Monomer.</text>
</comment>
<comment type="subcellular location">
    <subcellularLocation>
        <location evidence="1">Secreted</location>
    </subcellularLocation>
</comment>
<comment type="tissue specificity">
    <text>Expressed by the venom gland.</text>
</comment>
<comment type="similarity">
    <text evidence="6">Belongs to the venom metalloproteinase (M12B) family. P-III subfamily. P-IIIa sub-subfamily.</text>
</comment>
<accession>A8QL59</accession>
<protein>
    <recommendedName>
        <fullName>Zinc metalloproteinase-disintegrin-like NaMP</fullName>
        <ecNumber>3.4.24.-</ecNumber>
    </recommendedName>
    <alternativeName>
        <fullName>Snake venom metalloproteinase</fullName>
        <shortName>SVMP</shortName>
    </alternativeName>
</protein>
<evidence type="ECO:0000250" key="1"/>
<evidence type="ECO:0000255" key="2"/>
<evidence type="ECO:0000255" key="3">
    <source>
        <dbReference type="PROSITE-ProRule" id="PRU00068"/>
    </source>
</evidence>
<evidence type="ECO:0000255" key="4">
    <source>
        <dbReference type="PROSITE-ProRule" id="PRU00276"/>
    </source>
</evidence>
<evidence type="ECO:0000255" key="5">
    <source>
        <dbReference type="PROSITE-ProRule" id="PRU10095"/>
    </source>
</evidence>
<evidence type="ECO:0000305" key="6"/>